<sequence length="144" mass="15975">MAESNNRMVVSLEDLLAQADALRKEIDALQKLRDEIAESLNAARSAKEAINLIKGQGKDLLLSADRRGFVLLKVTEIPSSKVLVNLGLGYYAEIEPDQASKILDEREEQLNKSLQDITARLNNAVNAYTQIAEILNRAQQQQGE</sequence>
<reference key="1">
    <citation type="journal article" date="2008" name="Appl. Environ. Microbiol.">
        <title>The genome sequence of the metal-mobilizing, extremely thermoacidophilic archaeon Metallosphaera sedula provides insights into bioleaching-associated metabolism.</title>
        <authorList>
            <person name="Auernik K.S."/>
            <person name="Maezato Y."/>
            <person name="Blum P.H."/>
            <person name="Kelly R.M."/>
        </authorList>
    </citation>
    <scope>NUCLEOTIDE SEQUENCE [LARGE SCALE GENOMIC DNA]</scope>
    <source>
        <strain>ATCC 51363 / DSM 5348 / JCM 9185 / NBRC 15509 / TH2</strain>
    </source>
</reference>
<evidence type="ECO:0000255" key="1">
    <source>
        <dbReference type="HAMAP-Rule" id="MF_00308"/>
    </source>
</evidence>
<accession>A4YH83</accession>
<gene>
    <name evidence="1" type="primary">pfdA</name>
    <name type="ordered locus">Msed_1630</name>
</gene>
<comment type="function">
    <text evidence="1">Molecular chaperone capable of stabilizing a range of proteins. Seems to fulfill an ATP-independent, HSP70-like function in archaeal de novo protein folding.</text>
</comment>
<comment type="subunit">
    <text evidence="1">Heterohexamer of two alpha and four beta subunits.</text>
</comment>
<comment type="subcellular location">
    <subcellularLocation>
        <location evidence="1">Cytoplasm</location>
    </subcellularLocation>
</comment>
<comment type="similarity">
    <text evidence="1">Belongs to the prefoldin alpha subunit family.</text>
</comment>
<feature type="chain" id="PRO_0000322251" description="Prefoldin subunit alpha">
    <location>
        <begin position="1"/>
        <end position="144"/>
    </location>
</feature>
<proteinExistence type="inferred from homology"/>
<name>PFDA_METS5</name>
<dbReference type="EMBL" id="CP000682">
    <property type="protein sequence ID" value="ABP95785.1"/>
    <property type="molecule type" value="Genomic_DNA"/>
</dbReference>
<dbReference type="RefSeq" id="WP_012021572.1">
    <property type="nucleotide sequence ID" value="NZ_CP139956.1"/>
</dbReference>
<dbReference type="SMR" id="A4YH83"/>
<dbReference type="STRING" id="399549.Msed_1630"/>
<dbReference type="GeneID" id="97613266"/>
<dbReference type="KEGG" id="mse:Msed_1630"/>
<dbReference type="eggNOG" id="arCOG01341">
    <property type="taxonomic scope" value="Archaea"/>
</dbReference>
<dbReference type="HOGENOM" id="CLU_1792160_0_0_2"/>
<dbReference type="Proteomes" id="UP000000242">
    <property type="component" value="Chromosome"/>
</dbReference>
<dbReference type="GO" id="GO:0005737">
    <property type="term" value="C:cytoplasm"/>
    <property type="evidence" value="ECO:0007669"/>
    <property type="project" value="UniProtKB-SubCell"/>
</dbReference>
<dbReference type="GO" id="GO:0016272">
    <property type="term" value="C:prefoldin complex"/>
    <property type="evidence" value="ECO:0007669"/>
    <property type="project" value="UniProtKB-UniRule"/>
</dbReference>
<dbReference type="GO" id="GO:0051082">
    <property type="term" value="F:unfolded protein binding"/>
    <property type="evidence" value="ECO:0007669"/>
    <property type="project" value="UniProtKB-UniRule"/>
</dbReference>
<dbReference type="GO" id="GO:0006457">
    <property type="term" value="P:protein folding"/>
    <property type="evidence" value="ECO:0007669"/>
    <property type="project" value="UniProtKB-UniRule"/>
</dbReference>
<dbReference type="CDD" id="cd00584">
    <property type="entry name" value="Prefoldin_alpha"/>
    <property type="match status" value="1"/>
</dbReference>
<dbReference type="Gene3D" id="1.10.287.370">
    <property type="match status" value="1"/>
</dbReference>
<dbReference type="HAMAP" id="MF_00308">
    <property type="entry name" value="PfdA"/>
    <property type="match status" value="1"/>
</dbReference>
<dbReference type="InterPro" id="IPR011599">
    <property type="entry name" value="PFD_alpha_archaea"/>
</dbReference>
<dbReference type="InterPro" id="IPR009053">
    <property type="entry name" value="Prefoldin"/>
</dbReference>
<dbReference type="InterPro" id="IPR004127">
    <property type="entry name" value="Prefoldin_subunit_alpha"/>
</dbReference>
<dbReference type="NCBIfam" id="TIGR00293">
    <property type="entry name" value="prefoldin subunit alpha"/>
    <property type="match status" value="1"/>
</dbReference>
<dbReference type="PANTHER" id="PTHR12674">
    <property type="entry name" value="PREFOLDIN SUBUNIT 5"/>
    <property type="match status" value="1"/>
</dbReference>
<dbReference type="PANTHER" id="PTHR12674:SF2">
    <property type="entry name" value="PREFOLDIN SUBUNIT 5"/>
    <property type="match status" value="1"/>
</dbReference>
<dbReference type="Pfam" id="PF02996">
    <property type="entry name" value="Prefoldin"/>
    <property type="match status" value="1"/>
</dbReference>
<dbReference type="SUPFAM" id="SSF46579">
    <property type="entry name" value="Prefoldin"/>
    <property type="match status" value="1"/>
</dbReference>
<keyword id="KW-0143">Chaperone</keyword>
<keyword id="KW-0963">Cytoplasm</keyword>
<keyword id="KW-1185">Reference proteome</keyword>
<protein>
    <recommendedName>
        <fullName evidence="1">Prefoldin subunit alpha</fullName>
    </recommendedName>
    <alternativeName>
        <fullName evidence="1">GimC subunit alpha</fullName>
    </alternativeName>
</protein>
<organism>
    <name type="scientific">Metallosphaera sedula (strain ATCC 51363 / DSM 5348 / JCM 9185 / NBRC 15509 / TH2)</name>
    <dbReference type="NCBI Taxonomy" id="399549"/>
    <lineage>
        <taxon>Archaea</taxon>
        <taxon>Thermoproteota</taxon>
        <taxon>Thermoprotei</taxon>
        <taxon>Sulfolobales</taxon>
        <taxon>Sulfolobaceae</taxon>
        <taxon>Metallosphaera</taxon>
    </lineage>
</organism>